<evidence type="ECO:0000255" key="1">
    <source>
        <dbReference type="HAMAP-Rule" id="MF_01445"/>
    </source>
</evidence>
<gene>
    <name evidence="1" type="primary">tsaD</name>
    <name type="synonym">gcp</name>
    <name type="ordered locus">RALTA_A2233</name>
</gene>
<keyword id="KW-0012">Acyltransferase</keyword>
<keyword id="KW-0963">Cytoplasm</keyword>
<keyword id="KW-0408">Iron</keyword>
<keyword id="KW-0479">Metal-binding</keyword>
<keyword id="KW-0808">Transferase</keyword>
<keyword id="KW-0819">tRNA processing</keyword>
<accession>B3R5H2</accession>
<proteinExistence type="inferred from homology"/>
<protein>
    <recommendedName>
        <fullName evidence="1">tRNA N6-adenosine threonylcarbamoyltransferase</fullName>
        <ecNumber evidence="1">2.3.1.234</ecNumber>
    </recommendedName>
    <alternativeName>
        <fullName evidence="1">N6-L-threonylcarbamoyladenine synthase</fullName>
        <shortName evidence="1">t(6)A synthase</shortName>
    </alternativeName>
    <alternativeName>
        <fullName evidence="1">t(6)A37 threonylcarbamoyladenosine biosynthesis protein TsaD</fullName>
    </alternativeName>
    <alternativeName>
        <fullName evidence="1">tRNA threonylcarbamoyladenosine biosynthesis protein TsaD</fullName>
    </alternativeName>
</protein>
<sequence length="344" mass="36656">MLVLGIESSCDETGLALYDTGAGLLAHALHSQIAMHRDYGGVVPELASRDHIRRVLPLLEQVLADAGRTRQDIDAIAFTQGPGLAGALLVGASVANALGFALNVPMVGVHHLEGHLLSPLLTREPPPFPFVALLVSGGHTQLMEVRGIGDYALLGETLDDAAGEAFDKTAKLLGLGYPGGPEVSRLAEFGVPGAFELPRPMLHSGNLDFSFAGLKTAVLTQTRKLANTCEQDRANLARAFVDAIVDVLVAKSMAALRQTGHKRLVVAGGVGANRQLRERLDQLGRQRKLDVYYPDLAFCTDNGAMIAFAGAMRLQAAPELARREYGYGVTPRWDLADIRLPSAA</sequence>
<comment type="function">
    <text evidence="1">Required for the formation of a threonylcarbamoyl group on adenosine at position 37 (t(6)A37) in tRNAs that read codons beginning with adenine. Is involved in the transfer of the threonylcarbamoyl moiety of threonylcarbamoyl-AMP (TC-AMP) to the N6 group of A37, together with TsaE and TsaB. TsaD likely plays a direct catalytic role in this reaction.</text>
</comment>
<comment type="catalytic activity">
    <reaction evidence="1">
        <text>L-threonylcarbamoyladenylate + adenosine(37) in tRNA = N(6)-L-threonylcarbamoyladenosine(37) in tRNA + AMP + H(+)</text>
        <dbReference type="Rhea" id="RHEA:37059"/>
        <dbReference type="Rhea" id="RHEA-COMP:10162"/>
        <dbReference type="Rhea" id="RHEA-COMP:10163"/>
        <dbReference type="ChEBI" id="CHEBI:15378"/>
        <dbReference type="ChEBI" id="CHEBI:73682"/>
        <dbReference type="ChEBI" id="CHEBI:74411"/>
        <dbReference type="ChEBI" id="CHEBI:74418"/>
        <dbReference type="ChEBI" id="CHEBI:456215"/>
        <dbReference type="EC" id="2.3.1.234"/>
    </reaction>
</comment>
<comment type="cofactor">
    <cofactor evidence="1">
        <name>Fe(2+)</name>
        <dbReference type="ChEBI" id="CHEBI:29033"/>
    </cofactor>
    <text evidence="1">Binds 1 Fe(2+) ion per subunit.</text>
</comment>
<comment type="subcellular location">
    <subcellularLocation>
        <location evidence="1">Cytoplasm</location>
    </subcellularLocation>
</comment>
<comment type="similarity">
    <text evidence="1">Belongs to the KAE1 / TsaD family.</text>
</comment>
<reference key="1">
    <citation type="journal article" date="2008" name="Genome Res.">
        <title>Genome sequence of the beta-rhizobium Cupriavidus taiwanensis and comparative genomics of rhizobia.</title>
        <authorList>
            <person name="Amadou C."/>
            <person name="Pascal G."/>
            <person name="Mangenot S."/>
            <person name="Glew M."/>
            <person name="Bontemps C."/>
            <person name="Capela D."/>
            <person name="Carrere S."/>
            <person name="Cruveiller S."/>
            <person name="Dossat C."/>
            <person name="Lajus A."/>
            <person name="Marchetti M."/>
            <person name="Poinsot V."/>
            <person name="Rouy Z."/>
            <person name="Servin B."/>
            <person name="Saad M."/>
            <person name="Schenowitz C."/>
            <person name="Barbe V."/>
            <person name="Batut J."/>
            <person name="Medigue C."/>
            <person name="Masson-Boivin C."/>
        </authorList>
    </citation>
    <scope>NUCLEOTIDE SEQUENCE [LARGE SCALE GENOMIC DNA]</scope>
    <source>
        <strain>DSM 17343 / BCRC 17206 / CCUG 44338 / CIP 107171 / LMG 19424 / R1</strain>
    </source>
</reference>
<name>TSAD_CUPTR</name>
<organism>
    <name type="scientific">Cupriavidus taiwanensis (strain DSM 17343 / BCRC 17206 / CCUG 44338 / CIP 107171 / LMG 19424 / R1)</name>
    <name type="common">Ralstonia taiwanensis (strain LMG 19424)</name>
    <dbReference type="NCBI Taxonomy" id="977880"/>
    <lineage>
        <taxon>Bacteria</taxon>
        <taxon>Pseudomonadati</taxon>
        <taxon>Pseudomonadota</taxon>
        <taxon>Betaproteobacteria</taxon>
        <taxon>Burkholderiales</taxon>
        <taxon>Burkholderiaceae</taxon>
        <taxon>Cupriavidus</taxon>
    </lineage>
</organism>
<dbReference type="EC" id="2.3.1.234" evidence="1"/>
<dbReference type="EMBL" id="CU633749">
    <property type="protein sequence ID" value="CAQ70167.1"/>
    <property type="molecule type" value="Genomic_DNA"/>
</dbReference>
<dbReference type="RefSeq" id="WP_012353472.1">
    <property type="nucleotide sequence ID" value="NC_010528.1"/>
</dbReference>
<dbReference type="SMR" id="B3R5H2"/>
<dbReference type="GeneID" id="29762439"/>
<dbReference type="KEGG" id="cti:RALTA_A2233"/>
<dbReference type="eggNOG" id="COG0533">
    <property type="taxonomic scope" value="Bacteria"/>
</dbReference>
<dbReference type="HOGENOM" id="CLU_023208_0_0_4"/>
<dbReference type="BioCyc" id="CTAI977880:RALTA_RS10825-MONOMER"/>
<dbReference type="Proteomes" id="UP000001692">
    <property type="component" value="Chromosome 1"/>
</dbReference>
<dbReference type="GO" id="GO:0005737">
    <property type="term" value="C:cytoplasm"/>
    <property type="evidence" value="ECO:0007669"/>
    <property type="project" value="UniProtKB-SubCell"/>
</dbReference>
<dbReference type="GO" id="GO:0005506">
    <property type="term" value="F:iron ion binding"/>
    <property type="evidence" value="ECO:0007669"/>
    <property type="project" value="UniProtKB-UniRule"/>
</dbReference>
<dbReference type="GO" id="GO:0061711">
    <property type="term" value="F:N(6)-L-threonylcarbamoyladenine synthase activity"/>
    <property type="evidence" value="ECO:0007669"/>
    <property type="project" value="UniProtKB-EC"/>
</dbReference>
<dbReference type="GO" id="GO:0002949">
    <property type="term" value="P:tRNA threonylcarbamoyladenosine modification"/>
    <property type="evidence" value="ECO:0007669"/>
    <property type="project" value="UniProtKB-UniRule"/>
</dbReference>
<dbReference type="CDD" id="cd24133">
    <property type="entry name" value="ASKHA_NBD_TsaD_bac"/>
    <property type="match status" value="1"/>
</dbReference>
<dbReference type="FunFam" id="3.30.420.40:FF:000012">
    <property type="entry name" value="tRNA N6-adenosine threonylcarbamoyltransferase"/>
    <property type="match status" value="1"/>
</dbReference>
<dbReference type="FunFam" id="3.30.420.40:FF:000040">
    <property type="entry name" value="tRNA N6-adenosine threonylcarbamoyltransferase"/>
    <property type="match status" value="1"/>
</dbReference>
<dbReference type="Gene3D" id="3.30.420.40">
    <property type="match status" value="2"/>
</dbReference>
<dbReference type="HAMAP" id="MF_01445">
    <property type="entry name" value="TsaD"/>
    <property type="match status" value="1"/>
</dbReference>
<dbReference type="InterPro" id="IPR043129">
    <property type="entry name" value="ATPase_NBD"/>
</dbReference>
<dbReference type="InterPro" id="IPR000905">
    <property type="entry name" value="Gcp-like_dom"/>
</dbReference>
<dbReference type="InterPro" id="IPR017861">
    <property type="entry name" value="KAE1/TsaD"/>
</dbReference>
<dbReference type="InterPro" id="IPR022450">
    <property type="entry name" value="TsaD"/>
</dbReference>
<dbReference type="NCBIfam" id="TIGR00329">
    <property type="entry name" value="gcp_kae1"/>
    <property type="match status" value="1"/>
</dbReference>
<dbReference type="NCBIfam" id="TIGR03723">
    <property type="entry name" value="T6A_TsaD_YgjD"/>
    <property type="match status" value="1"/>
</dbReference>
<dbReference type="PANTHER" id="PTHR11735">
    <property type="entry name" value="TRNA N6-ADENOSINE THREONYLCARBAMOYLTRANSFERASE"/>
    <property type="match status" value="1"/>
</dbReference>
<dbReference type="PANTHER" id="PTHR11735:SF6">
    <property type="entry name" value="TRNA N6-ADENOSINE THREONYLCARBAMOYLTRANSFERASE, MITOCHONDRIAL"/>
    <property type="match status" value="1"/>
</dbReference>
<dbReference type="Pfam" id="PF00814">
    <property type="entry name" value="TsaD"/>
    <property type="match status" value="1"/>
</dbReference>
<dbReference type="PRINTS" id="PR00789">
    <property type="entry name" value="OSIALOPTASE"/>
</dbReference>
<dbReference type="SUPFAM" id="SSF53067">
    <property type="entry name" value="Actin-like ATPase domain"/>
    <property type="match status" value="2"/>
</dbReference>
<feature type="chain" id="PRO_1000145969" description="tRNA N6-adenosine threonylcarbamoyltransferase">
    <location>
        <begin position="1"/>
        <end position="344"/>
    </location>
</feature>
<feature type="binding site" evidence="1">
    <location>
        <position position="111"/>
    </location>
    <ligand>
        <name>Fe cation</name>
        <dbReference type="ChEBI" id="CHEBI:24875"/>
    </ligand>
</feature>
<feature type="binding site" evidence="1">
    <location>
        <position position="115"/>
    </location>
    <ligand>
        <name>Fe cation</name>
        <dbReference type="ChEBI" id="CHEBI:24875"/>
    </ligand>
</feature>
<feature type="binding site" evidence="1">
    <location>
        <begin position="134"/>
        <end position="138"/>
    </location>
    <ligand>
        <name>substrate</name>
    </ligand>
</feature>
<feature type="binding site" evidence="1">
    <location>
        <position position="167"/>
    </location>
    <ligand>
        <name>substrate</name>
    </ligand>
</feature>
<feature type="binding site" evidence="1">
    <location>
        <position position="180"/>
    </location>
    <ligand>
        <name>substrate</name>
    </ligand>
</feature>
<feature type="binding site" evidence="1">
    <location>
        <position position="273"/>
    </location>
    <ligand>
        <name>substrate</name>
    </ligand>
</feature>
<feature type="binding site" evidence="1">
    <location>
        <position position="301"/>
    </location>
    <ligand>
        <name>Fe cation</name>
        <dbReference type="ChEBI" id="CHEBI:24875"/>
    </ligand>
</feature>